<organismHost>
    <name type="scientific">Cavia cutleri</name>
    <name type="common">Guinea pig</name>
    <dbReference type="NCBI Taxonomy" id="10144"/>
</organismHost>
<organismHost>
    <name type="scientific">Cricetidae sp.</name>
    <name type="common">Hamster</name>
    <dbReference type="NCBI Taxonomy" id="36483"/>
</organismHost>
<organismHost>
    <name type="scientific">Mus musculus</name>
    <name type="common">Mouse</name>
    <dbReference type="NCBI Taxonomy" id="10090"/>
</organismHost>
<organismHost>
    <name type="scientific">Rattus norvegicus</name>
    <name type="common">Rat</name>
    <dbReference type="NCBI Taxonomy" id="10116"/>
</organismHost>
<protein>
    <recommendedName>
        <fullName>Matrix protein</fullName>
        <shortName>M protein</shortName>
    </recommendedName>
</protein>
<dbReference type="EMBL" id="D11446">
    <property type="protein sequence ID" value="BAA02010.1"/>
    <property type="molecule type" value="Genomic_RNA"/>
</dbReference>
<dbReference type="EMBL" id="AB065186">
    <property type="protein sequence ID" value="BAC79129.1"/>
    <property type="molecule type" value="Genomic_RNA"/>
</dbReference>
<dbReference type="EMBL" id="AB065187">
    <property type="protein sequence ID" value="BAC07509.1"/>
    <property type="molecule type" value="Genomic_RNA"/>
</dbReference>
<dbReference type="EMBL" id="AB065188">
    <property type="protein sequence ID" value="BAC79137.1"/>
    <property type="molecule type" value="Genomic_RNA"/>
</dbReference>
<dbReference type="EMBL" id="AB065189">
    <property type="protein sequence ID" value="BAC79145.1"/>
    <property type="molecule type" value="Genomic_RNA"/>
</dbReference>
<dbReference type="EMBL" id="AB039658">
    <property type="protein sequence ID" value="BAB20023.1"/>
    <property type="molecule type" value="Genomic_RNA"/>
</dbReference>
<dbReference type="SMR" id="Q88266"/>
<dbReference type="Proteomes" id="UP000007191">
    <property type="component" value="Genome"/>
</dbReference>
<dbReference type="Proteomes" id="UP000008510">
    <property type="component" value="Genome"/>
</dbReference>
<dbReference type="Proteomes" id="UP000008857">
    <property type="component" value="Genome"/>
</dbReference>
<dbReference type="Proteomes" id="UP000180650">
    <property type="component" value="Genome"/>
</dbReference>
<dbReference type="Proteomes" id="UP000180718">
    <property type="component" value="Genome"/>
</dbReference>
<dbReference type="GO" id="GO:0030430">
    <property type="term" value="C:host cell cytoplasm"/>
    <property type="evidence" value="ECO:0007669"/>
    <property type="project" value="UniProtKB-SubCell"/>
</dbReference>
<dbReference type="GO" id="GO:0020002">
    <property type="term" value="C:host cell plasma membrane"/>
    <property type="evidence" value="ECO:0007669"/>
    <property type="project" value="UniProtKB-SubCell"/>
</dbReference>
<dbReference type="GO" id="GO:0016020">
    <property type="term" value="C:membrane"/>
    <property type="evidence" value="ECO:0007669"/>
    <property type="project" value="UniProtKB-KW"/>
</dbReference>
<dbReference type="GO" id="GO:0044423">
    <property type="term" value="C:virion component"/>
    <property type="evidence" value="ECO:0007669"/>
    <property type="project" value="UniProtKB-KW"/>
</dbReference>
<dbReference type="GO" id="GO:0039660">
    <property type="term" value="F:structural constituent of virion"/>
    <property type="evidence" value="ECO:0007669"/>
    <property type="project" value="UniProtKB-KW"/>
</dbReference>
<dbReference type="GO" id="GO:0039702">
    <property type="term" value="P:viral budding via host ESCRT complex"/>
    <property type="evidence" value="ECO:0007669"/>
    <property type="project" value="UniProtKB-KW"/>
</dbReference>
<dbReference type="Gene3D" id="2.70.20.60">
    <property type="entry name" value="Viral matrix protein, C-terminal domain"/>
    <property type="match status" value="1"/>
</dbReference>
<dbReference type="Gene3D" id="2.70.20.50">
    <property type="entry name" value="Viral matrix protein, N-terminal domain"/>
    <property type="match status" value="1"/>
</dbReference>
<dbReference type="InterPro" id="IPR042539">
    <property type="entry name" value="Matrix_C"/>
</dbReference>
<dbReference type="InterPro" id="IPR042540">
    <property type="entry name" value="Matrix_N"/>
</dbReference>
<dbReference type="InterPro" id="IPR055413">
    <property type="entry name" value="Matrix_Paramyxo_C"/>
</dbReference>
<dbReference type="InterPro" id="IPR000982">
    <property type="entry name" value="Matrix_Paramyxo_N"/>
</dbReference>
<dbReference type="Pfam" id="PF23765">
    <property type="entry name" value="Matrix_Paramyxo_C"/>
    <property type="match status" value="1"/>
</dbReference>
<dbReference type="Pfam" id="PF00661">
    <property type="entry name" value="Matrix_Paramyxo_N"/>
    <property type="match status" value="1"/>
</dbReference>
<evidence type="ECO:0000250" key="1"/>
<evidence type="ECO:0000250" key="2">
    <source>
        <dbReference type="UniProtKB" id="P06446"/>
    </source>
</evidence>
<evidence type="ECO:0000269" key="3">
    <source>
    </source>
</evidence>
<evidence type="ECO:0000305" key="4"/>
<comment type="function">
    <text evidence="1">Plays a crucial role in virion assembly and budding. Forms a shell at the inner face of the plasma membrane and concentrates the HN and F glycoproteins. Acts as a negative regulator for transcription and replication by sticking to the nucleocapsid. This effect might be regulated by the cytoplasmic interaction with tubulin that dissociates the M protein from the nucleocapsid (By similarity).</text>
</comment>
<comment type="subunit">
    <text evidence="2">Homomultimer. Binds to the cytoplasmic regions of F and HN proteins. Interacts with nucleocapsid. Interacts with human alpha-tubulin and beta-tubulin. Interacts with host ANP32B.</text>
</comment>
<comment type="subcellular location">
    <subcellularLocation>
        <location evidence="4">Virion</location>
    </subcellularLocation>
    <subcellularLocation>
        <location evidence="1">Host cytoplasm</location>
    </subcellularLocation>
    <subcellularLocation>
        <location evidence="1">Host cell membrane</location>
        <topology evidence="1">Peripheral membrane protein</topology>
        <orientation evidence="1">Cytoplasmic side</orientation>
    </subcellularLocation>
    <text evidence="1">During bud formation, associates at the inner side of the plasma membrane of infected cells.</text>
</comment>
<comment type="domain">
    <text evidence="3">Late-budding domains (L domains) are short sequence motifs essential for viral particle budding. They recruit proteins of the host ESCRT machinery (Endosomal Sorting Complex Required for Transport) or ESCRT-associated proteins. The matrix protein contains one L domain: a YLDL motif.</text>
</comment>
<comment type="PTM">
    <text evidence="1">A large portion is phosphorylated in the cytoplasm, but not in virion. However, this phosphorylation is not essential for virus replication (By similarity).</text>
</comment>
<comment type="similarity">
    <text evidence="4">Belongs to the morbillivirus/respirovirus/rubulavirus M protein family.</text>
</comment>
<gene>
    <name type="primary">M</name>
</gene>
<accession>Q88266</accession>
<accession>Q782E6</accession>
<sequence length="348" mass="38541">MADIYRFPKFSYEDNGTVEPLPLRTGPDKKAIPHIRIVKVGDPPKHGVRYLDLLLLGFFETPKQTASLGSVSDLTEHTGYSICGSGSLPIGVAKYHGSDQELLKACTDLRITVRRTVRAGEMIVYMVDSIGAPLLPWSGRLRQGMIFNANKVALAPQCLPVDKDIRFRVVFVNGTSLGAITIAKIPKTLADLALPNSISVNLLVTLKTGIPTEQKGVLPVLDDQGEKKLNFMVHLGLIRRKVGKIYSVEYCKSKIERMRLIFSLGLIGGISFHVQVTGTLSKTFMSQLAWKRAVCFPLMDVNPHMNLVIWAASVEITDVDAVFQPAIPRDFRYYPNVVAKNIGRIRKL</sequence>
<organism>
    <name type="scientific">Sendai virus (strain Hamamatsu)</name>
    <name type="common">SeV</name>
    <dbReference type="NCBI Taxonomy" id="302271"/>
    <lineage>
        <taxon>Viruses</taxon>
        <taxon>Riboviria</taxon>
        <taxon>Orthornavirae</taxon>
        <taxon>Negarnaviricota</taxon>
        <taxon>Haploviricotina</taxon>
        <taxon>Monjiviricetes</taxon>
        <taxon>Mononegavirales</taxon>
        <taxon>Paramyxoviridae</taxon>
        <taxon>Feraresvirinae</taxon>
        <taxon>Respirovirus</taxon>
        <taxon>Respirovirus muris</taxon>
    </lineage>
</organism>
<proteinExistence type="inferred from homology"/>
<feature type="chain" id="PRO_0000142771" description="Matrix protein">
    <location>
        <begin position="1"/>
        <end position="348"/>
    </location>
</feature>
<feature type="short sequence motif" description="YLDL motif">
    <location>
        <begin position="50"/>
        <end position="53"/>
    </location>
</feature>
<feature type="modified residue" description="Phosphoserine; by host" evidence="1">
    <location>
        <position position="70"/>
    </location>
</feature>
<keyword id="KW-1032">Host cell membrane</keyword>
<keyword id="KW-1035">Host cytoplasm</keyword>
<keyword id="KW-1043">Host membrane</keyword>
<keyword id="KW-0945">Host-virus interaction</keyword>
<keyword id="KW-0472">Membrane</keyword>
<keyword id="KW-0597">Phosphoprotein</keyword>
<keyword id="KW-1198">Viral budding</keyword>
<keyword id="KW-1187">Viral budding via the host ESCRT complexes</keyword>
<keyword id="KW-0468">Viral matrix protein</keyword>
<keyword id="KW-1188">Viral release from host cell</keyword>
<keyword id="KW-0946">Virion</keyword>
<reference key="1">
    <citation type="journal article" date="1994" name="Arch. Virol.">
        <title>A field isolate of Sendai virus: its high virulence to mice and genetic divergence from prototype strains.</title>
        <authorList>
            <person name="Sakaguchi T."/>
            <person name="Fujii Y."/>
            <person name="Kiyotani K."/>
            <person name="Sasaki M."/>
            <person name="Yoshida T."/>
        </authorList>
    </citation>
    <scope>NUCLEOTIDE SEQUENCE [GENOMIC RNA]</scope>
</reference>
<reference key="2">
    <citation type="journal article" date="2001" name="Virus Genes">
        <title>Conserved and non-conserved regions in the Sendai virus genome: evolution of a gene possessing overlapping reading frames.</title>
        <authorList>
            <person name="Fujii Y."/>
            <person name="Kiyotani K."/>
            <person name="Yoshida T."/>
            <person name="Sakaguchi T."/>
        </authorList>
    </citation>
    <scope>NUCLEOTIDE SEQUENCE [GENOMIC RNA]</scope>
</reference>
<reference key="3">
    <citation type="journal article" date="2002" name="J. Virol.">
        <title>Involvement of the leader sequence in Sendai virus pathogenesis revealed by recovery of a pathogenic field isolate from cDNA.</title>
        <authorList>
            <person name="Fujii Y."/>
            <person name="Sakaguchi T."/>
            <person name="Kiyotani K."/>
            <person name="Huang C."/>
            <person name="Fukuhara N."/>
            <person name="Egi Y."/>
            <person name="Yoshida T."/>
        </authorList>
    </citation>
    <scope>NUCLEOTIDE SEQUENCE [GENOMIC RNA]</scope>
    <source>
        <strain>Isolate E15cl2</strain>
    </source>
</reference>
<reference key="4">
    <citation type="journal article" date="2002" name="Virus Genes">
        <title>Identification of mutations associated with attenuation of virulence of a field Sendai virus isolate by egg passage.</title>
        <authorList>
            <person name="Fujii Y."/>
            <person name="Sakaguchi T."/>
            <person name="Kiyotani K."/>
            <person name="Huang C."/>
            <person name="Fukuhara N."/>
            <person name="Yoshida T."/>
        </authorList>
    </citation>
    <scope>NUCLEOTIDE SEQUENCE [GENOMIC RNA]</scope>
    <source>
        <strain>Isolate E15cl2</strain>
        <strain>Isolate E30cl2</strain>
        <strain>Isolate E30M15cl5</strain>
    </source>
</reference>
<reference key="5">
    <citation type="submission" date="2001-07" db="EMBL/GenBank/DDBJ databases">
        <authorList>
            <person name="Fujii Y."/>
            <person name="Kiyotani K."/>
            <person name="Huang C."/>
            <person name="Fukuhara N."/>
            <person name="Egi K."/>
            <person name="Yoshida T."/>
            <person name="Sakaguchi T."/>
        </authorList>
    </citation>
    <scope>NUCLEOTIDE SEQUENCE [GENOMIC RNA]</scope>
    <source>
        <strain>Isolate E50cl9</strain>
    </source>
</reference>
<reference key="6">
    <citation type="journal article" date="2007" name="J. Virol.">
        <title>The YLDL sequence within Sendai virus M protein is critical for budding of virus-like particles and interacts with Alix/AIP1 independently of C protein.</title>
        <authorList>
            <person name="Irie T."/>
            <person name="Shimazu Y."/>
            <person name="Yoshida T."/>
            <person name="Sakaguchi T."/>
        </authorList>
    </citation>
    <scope>DOMAIN LATE-BUDDING</scope>
</reference>
<name>MATRX_SENDA</name>